<keyword id="KW-0028">Amino-acid biosynthesis</keyword>
<keyword id="KW-0963">Cytoplasm</keyword>
<keyword id="KW-0368">Histidine biosynthesis</keyword>
<keyword id="KW-0378">Hydrolase</keyword>
<keyword id="KW-0460">Magnesium</keyword>
<keyword id="KW-0479">Metal-binding</keyword>
<keyword id="KW-0862">Zinc</keyword>
<proteinExistence type="inferred from homology"/>
<reference key="1">
    <citation type="journal article" date="2010" name="Genome Biol. Evol.">
        <title>Continuing evolution of Burkholderia mallei through genome reduction and large-scale rearrangements.</title>
        <authorList>
            <person name="Losada L."/>
            <person name="Ronning C.M."/>
            <person name="DeShazer D."/>
            <person name="Woods D."/>
            <person name="Fedorova N."/>
            <person name="Kim H.S."/>
            <person name="Shabalina S.A."/>
            <person name="Pearson T.R."/>
            <person name="Brinkac L."/>
            <person name="Tan P."/>
            <person name="Nandi T."/>
            <person name="Crabtree J."/>
            <person name="Badger J."/>
            <person name="Beckstrom-Sternberg S."/>
            <person name="Saqib M."/>
            <person name="Schutzer S.E."/>
            <person name="Keim P."/>
            <person name="Nierman W.C."/>
        </authorList>
    </citation>
    <scope>NUCLEOTIDE SEQUENCE [LARGE SCALE GENOMIC DNA]</scope>
    <source>
        <strain>NCTC 10247</strain>
    </source>
</reference>
<organism>
    <name type="scientific">Burkholderia mallei (strain NCTC 10247)</name>
    <dbReference type="NCBI Taxonomy" id="320389"/>
    <lineage>
        <taxon>Bacteria</taxon>
        <taxon>Pseudomonadati</taxon>
        <taxon>Pseudomonadota</taxon>
        <taxon>Betaproteobacteria</taxon>
        <taxon>Burkholderiales</taxon>
        <taxon>Burkholderiaceae</taxon>
        <taxon>Burkholderia</taxon>
        <taxon>pseudomallei group</taxon>
    </lineage>
</organism>
<dbReference type="EC" id="3.5.4.19" evidence="1"/>
<dbReference type="EMBL" id="CP000548">
    <property type="protein sequence ID" value="ABO05010.1"/>
    <property type="molecule type" value="Genomic_DNA"/>
</dbReference>
<dbReference type="RefSeq" id="WP_004201279.1">
    <property type="nucleotide sequence ID" value="NZ_CP007802.1"/>
</dbReference>
<dbReference type="SMR" id="A3MPU3"/>
<dbReference type="GeneID" id="93061749"/>
<dbReference type="KEGG" id="bmaz:BM44_574"/>
<dbReference type="KEGG" id="bmn:BMA10247_2758"/>
<dbReference type="PATRIC" id="fig|320389.8.peg.628"/>
<dbReference type="UniPathway" id="UPA00031">
    <property type="reaction ID" value="UER00008"/>
</dbReference>
<dbReference type="GO" id="GO:0005737">
    <property type="term" value="C:cytoplasm"/>
    <property type="evidence" value="ECO:0007669"/>
    <property type="project" value="UniProtKB-SubCell"/>
</dbReference>
<dbReference type="GO" id="GO:0000287">
    <property type="term" value="F:magnesium ion binding"/>
    <property type="evidence" value="ECO:0007669"/>
    <property type="project" value="UniProtKB-UniRule"/>
</dbReference>
<dbReference type="GO" id="GO:0004635">
    <property type="term" value="F:phosphoribosyl-AMP cyclohydrolase activity"/>
    <property type="evidence" value="ECO:0007669"/>
    <property type="project" value="UniProtKB-UniRule"/>
</dbReference>
<dbReference type="GO" id="GO:0008270">
    <property type="term" value="F:zinc ion binding"/>
    <property type="evidence" value="ECO:0007669"/>
    <property type="project" value="UniProtKB-UniRule"/>
</dbReference>
<dbReference type="GO" id="GO:0000105">
    <property type="term" value="P:L-histidine biosynthetic process"/>
    <property type="evidence" value="ECO:0007669"/>
    <property type="project" value="UniProtKB-UniRule"/>
</dbReference>
<dbReference type="FunFam" id="3.10.20.810:FF:000001">
    <property type="entry name" value="Histidine biosynthesis bifunctional protein HisIE"/>
    <property type="match status" value="1"/>
</dbReference>
<dbReference type="Gene3D" id="3.10.20.810">
    <property type="entry name" value="Phosphoribosyl-AMP cyclohydrolase"/>
    <property type="match status" value="1"/>
</dbReference>
<dbReference type="HAMAP" id="MF_01021">
    <property type="entry name" value="HisI"/>
    <property type="match status" value="1"/>
</dbReference>
<dbReference type="InterPro" id="IPR026660">
    <property type="entry name" value="PRA-CH"/>
</dbReference>
<dbReference type="InterPro" id="IPR002496">
    <property type="entry name" value="PRib_AMP_CycHydrolase_dom"/>
</dbReference>
<dbReference type="InterPro" id="IPR038019">
    <property type="entry name" value="PRib_AMP_CycHydrolase_sf"/>
</dbReference>
<dbReference type="NCBIfam" id="NF000768">
    <property type="entry name" value="PRK00051.1"/>
    <property type="match status" value="1"/>
</dbReference>
<dbReference type="PANTHER" id="PTHR42945">
    <property type="entry name" value="HISTIDINE BIOSYNTHESIS BIFUNCTIONAL PROTEIN"/>
    <property type="match status" value="1"/>
</dbReference>
<dbReference type="PANTHER" id="PTHR42945:SF1">
    <property type="entry name" value="HISTIDINE BIOSYNTHESIS BIFUNCTIONAL PROTEIN HIS7"/>
    <property type="match status" value="1"/>
</dbReference>
<dbReference type="Pfam" id="PF01502">
    <property type="entry name" value="PRA-CH"/>
    <property type="match status" value="1"/>
</dbReference>
<dbReference type="SUPFAM" id="SSF141734">
    <property type="entry name" value="HisI-like"/>
    <property type="match status" value="1"/>
</dbReference>
<gene>
    <name evidence="1" type="primary">hisI</name>
    <name type="ordered locus">BMA10247_2758</name>
</gene>
<evidence type="ECO:0000255" key="1">
    <source>
        <dbReference type="HAMAP-Rule" id="MF_01021"/>
    </source>
</evidence>
<protein>
    <recommendedName>
        <fullName evidence="1">Phosphoribosyl-AMP cyclohydrolase</fullName>
        <shortName evidence="1">PRA-CH</shortName>
        <ecNumber evidence="1">3.5.4.19</ecNumber>
    </recommendedName>
</protein>
<feature type="chain" id="PRO_1000063394" description="Phosphoribosyl-AMP cyclohydrolase">
    <location>
        <begin position="1"/>
        <end position="137"/>
    </location>
</feature>
<feature type="binding site" evidence="1">
    <location>
        <position position="83"/>
    </location>
    <ligand>
        <name>Mg(2+)</name>
        <dbReference type="ChEBI" id="CHEBI:18420"/>
    </ligand>
</feature>
<feature type="binding site" evidence="1">
    <location>
        <position position="84"/>
    </location>
    <ligand>
        <name>Zn(2+)</name>
        <dbReference type="ChEBI" id="CHEBI:29105"/>
        <note>ligand shared between dimeric partners</note>
    </ligand>
</feature>
<feature type="binding site" evidence="1">
    <location>
        <position position="85"/>
    </location>
    <ligand>
        <name>Mg(2+)</name>
        <dbReference type="ChEBI" id="CHEBI:18420"/>
    </ligand>
</feature>
<feature type="binding site" evidence="1">
    <location>
        <position position="87"/>
    </location>
    <ligand>
        <name>Mg(2+)</name>
        <dbReference type="ChEBI" id="CHEBI:18420"/>
    </ligand>
</feature>
<feature type="binding site" evidence="1">
    <location>
        <position position="101"/>
    </location>
    <ligand>
        <name>Zn(2+)</name>
        <dbReference type="ChEBI" id="CHEBI:29105"/>
        <note>ligand shared between dimeric partners</note>
    </ligand>
</feature>
<feature type="binding site" evidence="1">
    <location>
        <position position="108"/>
    </location>
    <ligand>
        <name>Zn(2+)</name>
        <dbReference type="ChEBI" id="CHEBI:29105"/>
        <note>ligand shared between dimeric partners</note>
    </ligand>
</feature>
<name>HIS3_BURM7</name>
<sequence>MNAEAKPGDWLGKVRWDANGLVPVIAQDAATNDVLMFAWMNRDALAKTIELKRAVYYSRSRQRLWFKGEESGHVQHVHEVRLDCDEDVVLLKVEQVEGIACHTGRRSCFFQKFEGTVDDGEWVAVDPVLKDPEHIYK</sequence>
<accession>A3MPU3</accession>
<comment type="function">
    <text evidence="1">Catalyzes the hydrolysis of the adenine ring of phosphoribosyl-AMP.</text>
</comment>
<comment type="catalytic activity">
    <reaction evidence="1">
        <text>1-(5-phospho-beta-D-ribosyl)-5'-AMP + H2O = 1-(5-phospho-beta-D-ribosyl)-5-[(5-phospho-beta-D-ribosylamino)methylideneamino]imidazole-4-carboxamide</text>
        <dbReference type="Rhea" id="RHEA:20049"/>
        <dbReference type="ChEBI" id="CHEBI:15377"/>
        <dbReference type="ChEBI" id="CHEBI:58435"/>
        <dbReference type="ChEBI" id="CHEBI:59457"/>
        <dbReference type="EC" id="3.5.4.19"/>
    </reaction>
</comment>
<comment type="cofactor">
    <cofactor evidence="1">
        <name>Mg(2+)</name>
        <dbReference type="ChEBI" id="CHEBI:18420"/>
    </cofactor>
    <text evidence="1">Binds 1 Mg(2+) ion per subunit.</text>
</comment>
<comment type="cofactor">
    <cofactor evidence="1">
        <name>Zn(2+)</name>
        <dbReference type="ChEBI" id="CHEBI:29105"/>
    </cofactor>
    <text evidence="1">Binds 1 zinc ion per subunit.</text>
</comment>
<comment type="pathway">
    <text evidence="1">Amino-acid biosynthesis; L-histidine biosynthesis; L-histidine from 5-phospho-alpha-D-ribose 1-diphosphate: step 3/9.</text>
</comment>
<comment type="subunit">
    <text evidence="1">Homodimer.</text>
</comment>
<comment type="subcellular location">
    <subcellularLocation>
        <location evidence="1">Cytoplasm</location>
    </subcellularLocation>
</comment>
<comment type="similarity">
    <text evidence="1">Belongs to the PRA-CH family.</text>
</comment>